<organism>
    <name type="scientific">Neorickettsia sennetsu (strain ATCC VR-367 / Miyayama)</name>
    <name type="common">Ehrlichia sennetsu</name>
    <dbReference type="NCBI Taxonomy" id="222891"/>
    <lineage>
        <taxon>Bacteria</taxon>
        <taxon>Pseudomonadati</taxon>
        <taxon>Pseudomonadota</taxon>
        <taxon>Alphaproteobacteria</taxon>
        <taxon>Rickettsiales</taxon>
        <taxon>Anaplasmataceae</taxon>
        <taxon>Neorickettsia</taxon>
    </lineage>
</organism>
<keyword id="KW-0687">Ribonucleoprotein</keyword>
<keyword id="KW-0689">Ribosomal protein</keyword>
<keyword id="KW-0694">RNA-binding</keyword>
<keyword id="KW-0699">rRNA-binding</keyword>
<sequence length="205" mass="23342">MTTTIRRKFRVSRQMKASLWGSQKDPVHKRNYAPGQHGRAPVKKISDFYKQNAAQRAFRTYYVIGKKQFANVFSKAYRGKGNTNDNLISLLESRVSSVLYRSGMVPTIFAARQLISHKHVTVNGEIVNICSFTLKEGDVVQIRDRASNIPCVVAALNSNSESPHYLEVDREKRSVKLLVLPKFEDVPYPVVMEPNLVTEYFSSKM</sequence>
<evidence type="ECO:0000255" key="1">
    <source>
        <dbReference type="HAMAP-Rule" id="MF_01306"/>
    </source>
</evidence>
<evidence type="ECO:0000305" key="2"/>
<name>RS4_NEOSM</name>
<feature type="chain" id="PRO_0000293324" description="Small ribosomal subunit protein uS4">
    <location>
        <begin position="1"/>
        <end position="205"/>
    </location>
</feature>
<feature type="domain" description="S4 RNA-binding" evidence="1">
    <location>
        <begin position="93"/>
        <end position="171"/>
    </location>
</feature>
<protein>
    <recommendedName>
        <fullName evidence="1">Small ribosomal subunit protein uS4</fullName>
    </recommendedName>
    <alternativeName>
        <fullName evidence="2">30S ribosomal protein S4</fullName>
    </alternativeName>
</protein>
<comment type="function">
    <text evidence="1">One of the primary rRNA binding proteins, it binds directly to 16S rRNA where it nucleates assembly of the body of the 30S subunit.</text>
</comment>
<comment type="function">
    <text evidence="1">With S5 and S12 plays an important role in translational accuracy.</text>
</comment>
<comment type="subunit">
    <text evidence="1">Part of the 30S ribosomal subunit. Contacts protein S5. The interaction surface between S4 and S5 is involved in control of translational fidelity.</text>
</comment>
<comment type="similarity">
    <text evidence="1">Belongs to the universal ribosomal protein uS4 family.</text>
</comment>
<proteinExistence type="inferred from homology"/>
<dbReference type="EMBL" id="CP000237">
    <property type="protein sequence ID" value="ABD45999.1"/>
    <property type="molecule type" value="Genomic_DNA"/>
</dbReference>
<dbReference type="RefSeq" id="WP_011451969.1">
    <property type="nucleotide sequence ID" value="NC_007798.1"/>
</dbReference>
<dbReference type="SMR" id="Q2GDI3"/>
<dbReference type="STRING" id="222891.NSE_0583"/>
<dbReference type="KEGG" id="nse:NSE_0583"/>
<dbReference type="eggNOG" id="COG0522">
    <property type="taxonomic scope" value="Bacteria"/>
</dbReference>
<dbReference type="HOGENOM" id="CLU_092403_0_0_5"/>
<dbReference type="OrthoDB" id="9803672at2"/>
<dbReference type="Proteomes" id="UP000001942">
    <property type="component" value="Chromosome"/>
</dbReference>
<dbReference type="GO" id="GO:0015935">
    <property type="term" value="C:small ribosomal subunit"/>
    <property type="evidence" value="ECO:0007669"/>
    <property type="project" value="InterPro"/>
</dbReference>
<dbReference type="GO" id="GO:0019843">
    <property type="term" value="F:rRNA binding"/>
    <property type="evidence" value="ECO:0007669"/>
    <property type="project" value="UniProtKB-UniRule"/>
</dbReference>
<dbReference type="GO" id="GO:0003735">
    <property type="term" value="F:structural constituent of ribosome"/>
    <property type="evidence" value="ECO:0007669"/>
    <property type="project" value="InterPro"/>
</dbReference>
<dbReference type="GO" id="GO:0042274">
    <property type="term" value="P:ribosomal small subunit biogenesis"/>
    <property type="evidence" value="ECO:0007669"/>
    <property type="project" value="TreeGrafter"/>
</dbReference>
<dbReference type="GO" id="GO:0006412">
    <property type="term" value="P:translation"/>
    <property type="evidence" value="ECO:0007669"/>
    <property type="project" value="UniProtKB-UniRule"/>
</dbReference>
<dbReference type="CDD" id="cd00165">
    <property type="entry name" value="S4"/>
    <property type="match status" value="1"/>
</dbReference>
<dbReference type="FunFam" id="3.10.290.10:FF:000001">
    <property type="entry name" value="30S ribosomal protein S4"/>
    <property type="match status" value="1"/>
</dbReference>
<dbReference type="Gene3D" id="1.10.1050.10">
    <property type="entry name" value="Ribosomal Protein S4 Delta 41, Chain A, domain 1"/>
    <property type="match status" value="1"/>
</dbReference>
<dbReference type="Gene3D" id="3.10.290.10">
    <property type="entry name" value="RNA-binding S4 domain"/>
    <property type="match status" value="1"/>
</dbReference>
<dbReference type="HAMAP" id="MF_01306_B">
    <property type="entry name" value="Ribosomal_uS4_B"/>
    <property type="match status" value="1"/>
</dbReference>
<dbReference type="InterPro" id="IPR022801">
    <property type="entry name" value="Ribosomal_uS4"/>
</dbReference>
<dbReference type="InterPro" id="IPR005709">
    <property type="entry name" value="Ribosomal_uS4_bac-type"/>
</dbReference>
<dbReference type="InterPro" id="IPR001912">
    <property type="entry name" value="Ribosomal_uS4_N"/>
</dbReference>
<dbReference type="InterPro" id="IPR002942">
    <property type="entry name" value="S4_RNA-bd"/>
</dbReference>
<dbReference type="InterPro" id="IPR036986">
    <property type="entry name" value="S4_RNA-bd_sf"/>
</dbReference>
<dbReference type="NCBIfam" id="NF003717">
    <property type="entry name" value="PRK05327.1"/>
    <property type="match status" value="1"/>
</dbReference>
<dbReference type="NCBIfam" id="TIGR01017">
    <property type="entry name" value="rpsD_bact"/>
    <property type="match status" value="1"/>
</dbReference>
<dbReference type="PANTHER" id="PTHR11831">
    <property type="entry name" value="30S 40S RIBOSOMAL PROTEIN"/>
    <property type="match status" value="1"/>
</dbReference>
<dbReference type="PANTHER" id="PTHR11831:SF4">
    <property type="entry name" value="SMALL RIBOSOMAL SUBUNIT PROTEIN US4M"/>
    <property type="match status" value="1"/>
</dbReference>
<dbReference type="Pfam" id="PF00163">
    <property type="entry name" value="Ribosomal_S4"/>
    <property type="match status" value="1"/>
</dbReference>
<dbReference type="Pfam" id="PF01479">
    <property type="entry name" value="S4"/>
    <property type="match status" value="1"/>
</dbReference>
<dbReference type="SMART" id="SM01390">
    <property type="entry name" value="Ribosomal_S4"/>
    <property type="match status" value="1"/>
</dbReference>
<dbReference type="SMART" id="SM00363">
    <property type="entry name" value="S4"/>
    <property type="match status" value="1"/>
</dbReference>
<dbReference type="SUPFAM" id="SSF55174">
    <property type="entry name" value="Alpha-L RNA-binding motif"/>
    <property type="match status" value="1"/>
</dbReference>
<dbReference type="PROSITE" id="PS50889">
    <property type="entry name" value="S4"/>
    <property type="match status" value="1"/>
</dbReference>
<accession>Q2GDI3</accession>
<gene>
    <name evidence="1" type="primary">rpsD</name>
    <name type="ordered locus">NSE_0583</name>
</gene>
<reference key="1">
    <citation type="journal article" date="2006" name="PLoS Genet.">
        <title>Comparative genomics of emerging human ehrlichiosis agents.</title>
        <authorList>
            <person name="Dunning Hotopp J.C."/>
            <person name="Lin M."/>
            <person name="Madupu R."/>
            <person name="Crabtree J."/>
            <person name="Angiuoli S.V."/>
            <person name="Eisen J.A."/>
            <person name="Seshadri R."/>
            <person name="Ren Q."/>
            <person name="Wu M."/>
            <person name="Utterback T.R."/>
            <person name="Smith S."/>
            <person name="Lewis M."/>
            <person name="Khouri H."/>
            <person name="Zhang C."/>
            <person name="Niu H."/>
            <person name="Lin Q."/>
            <person name="Ohashi N."/>
            <person name="Zhi N."/>
            <person name="Nelson W.C."/>
            <person name="Brinkac L.M."/>
            <person name="Dodson R.J."/>
            <person name="Rosovitz M.J."/>
            <person name="Sundaram J.P."/>
            <person name="Daugherty S.C."/>
            <person name="Davidsen T."/>
            <person name="Durkin A.S."/>
            <person name="Gwinn M.L."/>
            <person name="Haft D.H."/>
            <person name="Selengut J.D."/>
            <person name="Sullivan S.A."/>
            <person name="Zafar N."/>
            <person name="Zhou L."/>
            <person name="Benahmed F."/>
            <person name="Forberger H."/>
            <person name="Halpin R."/>
            <person name="Mulligan S."/>
            <person name="Robinson J."/>
            <person name="White O."/>
            <person name="Rikihisa Y."/>
            <person name="Tettelin H."/>
        </authorList>
    </citation>
    <scope>NUCLEOTIDE SEQUENCE [LARGE SCALE GENOMIC DNA]</scope>
    <source>
        <strain>ATCC VR-367 / Miyayama</strain>
    </source>
</reference>